<gene>
    <name type="primary">CD40</name>
    <name type="synonym">TNFRSF5</name>
</gene>
<proteinExistence type="evidence at transcript level"/>
<accession>Q7YRL5</accession>
<dbReference type="EMBL" id="AY333789">
    <property type="protein sequence ID" value="AAP86653.1"/>
    <property type="molecule type" value="mRNA"/>
</dbReference>
<dbReference type="RefSeq" id="NP_001002982.1">
    <property type="nucleotide sequence ID" value="NM_001002982.1"/>
</dbReference>
<dbReference type="SMR" id="Q7YRL5"/>
<dbReference type="FunCoup" id="Q7YRL5">
    <property type="interactions" value="101"/>
</dbReference>
<dbReference type="STRING" id="9615.ENSCAFP00000061346"/>
<dbReference type="GlyCosmos" id="Q7YRL5">
    <property type="glycosylation" value="2 sites, No reported glycans"/>
</dbReference>
<dbReference type="PaxDb" id="9612-ENSCAFP00000014701"/>
<dbReference type="GeneID" id="403469"/>
<dbReference type="KEGG" id="cfa:403469"/>
<dbReference type="CTD" id="958"/>
<dbReference type="eggNOG" id="ENOG502S5TQ">
    <property type="taxonomic scope" value="Eukaryota"/>
</dbReference>
<dbReference type="InParanoid" id="Q7YRL5"/>
<dbReference type="OrthoDB" id="9932129at2759"/>
<dbReference type="Proteomes" id="UP000002254">
    <property type="component" value="Unplaced"/>
</dbReference>
<dbReference type="Proteomes" id="UP000694429">
    <property type="component" value="Unplaced"/>
</dbReference>
<dbReference type="Proteomes" id="UP000694542">
    <property type="component" value="Unplaced"/>
</dbReference>
<dbReference type="Proteomes" id="UP000805418">
    <property type="component" value="Unplaced"/>
</dbReference>
<dbReference type="GO" id="GO:0035631">
    <property type="term" value="C:CD40 receptor complex"/>
    <property type="evidence" value="ECO:0000318"/>
    <property type="project" value="GO_Central"/>
</dbReference>
<dbReference type="GO" id="GO:0009897">
    <property type="term" value="C:external side of plasma membrane"/>
    <property type="evidence" value="ECO:0000318"/>
    <property type="project" value="GO_Central"/>
</dbReference>
<dbReference type="GO" id="GO:0038023">
    <property type="term" value="F:signaling receptor activity"/>
    <property type="evidence" value="ECO:0007669"/>
    <property type="project" value="InterPro"/>
</dbReference>
<dbReference type="GO" id="GO:0042113">
    <property type="term" value="P:B cell activation"/>
    <property type="evidence" value="ECO:0000318"/>
    <property type="project" value="GO_Central"/>
</dbReference>
<dbReference type="GO" id="GO:0002768">
    <property type="term" value="P:immune response-regulating cell surface receptor signaling pathway"/>
    <property type="evidence" value="ECO:0000318"/>
    <property type="project" value="GO_Central"/>
</dbReference>
<dbReference type="CDD" id="cd13407">
    <property type="entry name" value="TNFRSF5"/>
    <property type="match status" value="1"/>
</dbReference>
<dbReference type="FunFam" id="2.10.50.10:FF:000041">
    <property type="entry name" value="Tumor necrosis factor receptor superfamily member 5"/>
    <property type="match status" value="1"/>
</dbReference>
<dbReference type="Gene3D" id="2.10.50.10">
    <property type="entry name" value="Tumor Necrosis Factor Receptor, subunit A, domain 2"/>
    <property type="match status" value="3"/>
</dbReference>
<dbReference type="InterPro" id="IPR001368">
    <property type="entry name" value="TNFR/NGFR_Cys_rich_reg"/>
</dbReference>
<dbReference type="InterPro" id="IPR020435">
    <property type="entry name" value="TNFR_5"/>
</dbReference>
<dbReference type="InterPro" id="IPR052135">
    <property type="entry name" value="TNFRSF5"/>
</dbReference>
<dbReference type="InterPro" id="IPR034021">
    <property type="entry name" value="TNFRSF5_N"/>
</dbReference>
<dbReference type="PANTHER" id="PTHR46875">
    <property type="entry name" value="TUMOR NECROSIS FACTOR RECEPTOR SUPERFAMILY MEMBER 5"/>
    <property type="match status" value="1"/>
</dbReference>
<dbReference type="PANTHER" id="PTHR46875:SF1">
    <property type="entry name" value="TUMOR NECROSIS FACTOR RECEPTOR SUPERFAMILY MEMBER 5"/>
    <property type="match status" value="1"/>
</dbReference>
<dbReference type="Pfam" id="PF00020">
    <property type="entry name" value="TNFR_c6"/>
    <property type="match status" value="2"/>
</dbReference>
<dbReference type="PRINTS" id="PR01922">
    <property type="entry name" value="TNFACTORR5"/>
</dbReference>
<dbReference type="SMART" id="SM00208">
    <property type="entry name" value="TNFR"/>
    <property type="match status" value="4"/>
</dbReference>
<dbReference type="SUPFAM" id="SSF57586">
    <property type="entry name" value="TNF receptor-like"/>
    <property type="match status" value="2"/>
</dbReference>
<dbReference type="PROSITE" id="PS00652">
    <property type="entry name" value="TNFR_NGFR_1"/>
    <property type="match status" value="1"/>
</dbReference>
<dbReference type="PROSITE" id="PS50050">
    <property type="entry name" value="TNFR_NGFR_2"/>
    <property type="match status" value="3"/>
</dbReference>
<evidence type="ECO:0000250" key="1"/>
<evidence type="ECO:0000250" key="2">
    <source>
        <dbReference type="UniProtKB" id="P25942"/>
    </source>
</evidence>
<evidence type="ECO:0000250" key="3">
    <source>
        <dbReference type="UniProtKB" id="P27512"/>
    </source>
</evidence>
<evidence type="ECO:0000255" key="4"/>
<evidence type="ECO:0000255" key="5">
    <source>
        <dbReference type="PROSITE-ProRule" id="PRU00206"/>
    </source>
</evidence>
<feature type="signal peptide" evidence="4">
    <location>
        <begin position="1"/>
        <end position="20"/>
    </location>
</feature>
<feature type="chain" id="PRO_0000034558" description="Tumor necrosis factor receptor superfamily member 5">
    <location>
        <begin position="21"/>
        <end position="274"/>
    </location>
</feature>
<feature type="topological domain" description="Extracellular" evidence="4">
    <location>
        <begin position="21"/>
        <end position="194"/>
    </location>
</feature>
<feature type="transmembrane region" description="Helical" evidence="4">
    <location>
        <begin position="195"/>
        <end position="215"/>
    </location>
</feature>
<feature type="topological domain" description="Cytoplasmic" evidence="4">
    <location>
        <begin position="216"/>
        <end position="274"/>
    </location>
</feature>
<feature type="repeat" description="TNFR-Cys 1">
    <location>
        <begin position="25"/>
        <end position="60"/>
    </location>
</feature>
<feature type="repeat" description="TNFR-Cys 2">
    <location>
        <begin position="61"/>
        <end position="103"/>
    </location>
</feature>
<feature type="repeat" description="TNFR-Cys 3">
    <location>
        <begin position="104"/>
        <end position="144"/>
    </location>
</feature>
<feature type="repeat" description="TNFR-Cys 4">
    <location>
        <begin position="145"/>
        <end position="187"/>
    </location>
</feature>
<feature type="glycosylation site" description="N-linked (GlcNAc...) asparagine" evidence="4">
    <location>
        <position position="153"/>
    </location>
</feature>
<feature type="glycosylation site" description="N-linked (GlcNAc...) asparagine" evidence="4">
    <location>
        <position position="180"/>
    </location>
</feature>
<feature type="disulfide bond" evidence="5">
    <location>
        <begin position="26"/>
        <end position="37"/>
    </location>
</feature>
<feature type="disulfide bond" evidence="5">
    <location>
        <begin position="38"/>
        <end position="51"/>
    </location>
</feature>
<feature type="disulfide bond" evidence="5">
    <location>
        <begin position="41"/>
        <end position="59"/>
    </location>
</feature>
<feature type="disulfide bond" evidence="5">
    <location>
        <begin position="62"/>
        <end position="77"/>
    </location>
</feature>
<feature type="disulfide bond" evidence="5">
    <location>
        <begin position="83"/>
        <end position="103"/>
    </location>
</feature>
<feature type="disulfide bond" evidence="5">
    <location>
        <begin position="105"/>
        <end position="119"/>
    </location>
</feature>
<feature type="disulfide bond" evidence="5">
    <location>
        <begin position="111"/>
        <end position="116"/>
    </location>
</feature>
<feature type="disulfide bond" evidence="5">
    <location>
        <begin position="125"/>
        <end position="143"/>
    </location>
</feature>
<reference key="1">
    <citation type="submission" date="2003-07" db="EMBL/GenBank/DDBJ databases">
        <title>Canine CD40 and CD40 ligand cDNA sequences.</title>
        <authorList>
            <person name="Yang S."/>
            <person name="Sim G.-K."/>
        </authorList>
    </citation>
    <scope>NUCLEOTIDE SEQUENCE [MRNA]</scope>
</reference>
<keyword id="KW-1015">Disulfide bond</keyword>
<keyword id="KW-0325">Glycoprotein</keyword>
<keyword id="KW-0391">Immunity</keyword>
<keyword id="KW-0472">Membrane</keyword>
<keyword id="KW-0675">Receptor</keyword>
<keyword id="KW-1185">Reference proteome</keyword>
<keyword id="KW-0677">Repeat</keyword>
<keyword id="KW-0732">Signal</keyword>
<keyword id="KW-0812">Transmembrane</keyword>
<keyword id="KW-1133">Transmembrane helix</keyword>
<sequence length="274" mass="30284">MVLLPLRCLFWGSLLTTVYPEPRTACREKQYLVDSQCCNMCPPGEKLVNDCLHTIDTECTRCQTGEFLDTWNAERHCHQHKYCDPNLGLHVEKEGTSETDTTCTCDEGLHCTNAACESCTMHSLCPPGLGVKQIATGISDTICDPCPIGFFSNVSSALEKCHPWTSCETKGLVKVQAGTNKTDVICGPQPRLRALVVVPIIMGILLVVLLVSACIRKVVKKPENKVMYQDPVEDLEEFPMPPHSIAPVQETLHGCQPVTQEDGKESRISVQERV</sequence>
<name>TNR5_CANLF</name>
<comment type="function">
    <text evidence="2 3">Receptor for TNFSF5/CD40LG (By similarity). Transduces TRAF6- and MAP3K8-mediated signals that activate ERK in macrophages and B cells, leading to induction of immunoglobulin secretion (By similarity).</text>
</comment>
<comment type="subunit">
    <text evidence="1">Monomer and homodimer. Interacts with TRAF1, TRAF2, TRAF3, TRAF5 and TRAF6. Interacts with TRAF6 and MAP3K8; the interaction is required for ERK activation (By similarity).</text>
</comment>
<comment type="subcellular location">
    <subcellularLocation>
        <location>Membrane</location>
        <topology>Single-pass type I membrane protein</topology>
    </subcellularLocation>
</comment>
<organism>
    <name type="scientific">Canis lupus familiaris</name>
    <name type="common">Dog</name>
    <name type="synonym">Canis familiaris</name>
    <dbReference type="NCBI Taxonomy" id="9615"/>
    <lineage>
        <taxon>Eukaryota</taxon>
        <taxon>Metazoa</taxon>
        <taxon>Chordata</taxon>
        <taxon>Craniata</taxon>
        <taxon>Vertebrata</taxon>
        <taxon>Euteleostomi</taxon>
        <taxon>Mammalia</taxon>
        <taxon>Eutheria</taxon>
        <taxon>Laurasiatheria</taxon>
        <taxon>Carnivora</taxon>
        <taxon>Caniformia</taxon>
        <taxon>Canidae</taxon>
        <taxon>Canis</taxon>
    </lineage>
</organism>
<protein>
    <recommendedName>
        <fullName>Tumor necrosis factor receptor superfamily member 5</fullName>
    </recommendedName>
    <alternativeName>
        <fullName>B-cell surface antigen CD40</fullName>
    </alternativeName>
    <alternativeName>
        <fullName>CD40L receptor</fullName>
    </alternativeName>
    <cdAntigenName>CD40</cdAntigenName>
</protein>